<dbReference type="EMBL" id="DQ229107">
    <property type="protein sequence ID" value="ABA61974.1"/>
    <property type="molecule type" value="Genomic_DNA"/>
</dbReference>
<dbReference type="RefSeq" id="YP_635735.1">
    <property type="nucleotide sequence ID" value="NC_008097.1"/>
</dbReference>
<dbReference type="SMR" id="Q1ACL2"/>
<dbReference type="GeneID" id="4100197"/>
<dbReference type="GO" id="GO:0009507">
    <property type="term" value="C:chloroplast"/>
    <property type="evidence" value="ECO:0007669"/>
    <property type="project" value="UniProtKB-SubCell"/>
</dbReference>
<dbReference type="GO" id="GO:0015935">
    <property type="term" value="C:small ribosomal subunit"/>
    <property type="evidence" value="ECO:0007669"/>
    <property type="project" value="TreeGrafter"/>
</dbReference>
<dbReference type="GO" id="GO:0019843">
    <property type="term" value="F:rRNA binding"/>
    <property type="evidence" value="ECO:0007669"/>
    <property type="project" value="UniProtKB-UniRule"/>
</dbReference>
<dbReference type="GO" id="GO:0003735">
    <property type="term" value="F:structural constituent of ribosome"/>
    <property type="evidence" value="ECO:0007669"/>
    <property type="project" value="InterPro"/>
</dbReference>
<dbReference type="GO" id="GO:0006412">
    <property type="term" value="P:translation"/>
    <property type="evidence" value="ECO:0007669"/>
    <property type="project" value="UniProtKB-UniRule"/>
</dbReference>
<dbReference type="FunFam" id="1.10.287.1480:FF:000001">
    <property type="entry name" value="30S ribosomal protein S14"/>
    <property type="match status" value="1"/>
</dbReference>
<dbReference type="Gene3D" id="1.10.287.1480">
    <property type="match status" value="1"/>
</dbReference>
<dbReference type="HAMAP" id="MF_00537">
    <property type="entry name" value="Ribosomal_uS14_1"/>
    <property type="match status" value="1"/>
</dbReference>
<dbReference type="InterPro" id="IPR001209">
    <property type="entry name" value="Ribosomal_uS14"/>
</dbReference>
<dbReference type="InterPro" id="IPR023036">
    <property type="entry name" value="Ribosomal_uS14_bac/plastid"/>
</dbReference>
<dbReference type="NCBIfam" id="NF006477">
    <property type="entry name" value="PRK08881.1"/>
    <property type="match status" value="1"/>
</dbReference>
<dbReference type="PANTHER" id="PTHR19836">
    <property type="entry name" value="30S RIBOSOMAL PROTEIN S14"/>
    <property type="match status" value="1"/>
</dbReference>
<dbReference type="PANTHER" id="PTHR19836:SF19">
    <property type="entry name" value="SMALL RIBOSOMAL SUBUNIT PROTEIN US14M"/>
    <property type="match status" value="1"/>
</dbReference>
<dbReference type="Pfam" id="PF00253">
    <property type="entry name" value="Ribosomal_S14"/>
    <property type="match status" value="1"/>
</dbReference>
<dbReference type="SUPFAM" id="SSF57716">
    <property type="entry name" value="Glucocorticoid receptor-like (DNA-binding domain)"/>
    <property type="match status" value="1"/>
</dbReference>
<reference key="1">
    <citation type="journal article" date="2006" name="Mol. Biol. Evol.">
        <title>The chloroplast genome sequence of Chara vulgaris sheds new light into the closest green algal relatives of land plants.</title>
        <authorList>
            <person name="Turmel M."/>
            <person name="Otis C."/>
            <person name="Lemieux C."/>
        </authorList>
    </citation>
    <scope>NUCLEOTIDE SEQUENCE [LARGE SCALE GENOMIC DNA]</scope>
</reference>
<accession>Q1ACL2</accession>
<gene>
    <name evidence="1" type="primary">rps14</name>
</gene>
<name>RR14_CHAVU</name>
<sequence length="100" mass="11937">MAKKSLIERNKKRQRLVEKYFHLRQSLKKEMNQTLSVEEKWIFYKKLQALPRNSAGTRIKNICFITGRSKAYYRDFGISRHTFREMAHACLLPGLTKSSW</sequence>
<proteinExistence type="inferred from homology"/>
<organism>
    <name type="scientific">Chara vulgaris</name>
    <name type="common">Common stonewort</name>
    <dbReference type="NCBI Taxonomy" id="55564"/>
    <lineage>
        <taxon>Eukaryota</taxon>
        <taxon>Viridiplantae</taxon>
        <taxon>Streptophyta</taxon>
        <taxon>Charophyceae</taxon>
        <taxon>Charales</taxon>
        <taxon>Characeae</taxon>
        <taxon>Chara</taxon>
    </lineage>
</organism>
<keyword id="KW-0150">Chloroplast</keyword>
<keyword id="KW-0934">Plastid</keyword>
<keyword id="KW-0687">Ribonucleoprotein</keyword>
<keyword id="KW-0689">Ribosomal protein</keyword>
<keyword id="KW-0694">RNA-binding</keyword>
<keyword id="KW-0699">rRNA-binding</keyword>
<protein>
    <recommendedName>
        <fullName evidence="1">Small ribosomal subunit protein uS14c</fullName>
    </recommendedName>
    <alternativeName>
        <fullName evidence="2">30S ribosomal protein S14, chloroplastic</fullName>
    </alternativeName>
</protein>
<feature type="chain" id="PRO_0000276670" description="Small ribosomal subunit protein uS14c">
    <location>
        <begin position="1"/>
        <end position="100"/>
    </location>
</feature>
<comment type="function">
    <text evidence="1">Binds 16S rRNA, required for the assembly of 30S particles.</text>
</comment>
<comment type="subunit">
    <text evidence="1">Part of the 30S ribosomal subunit.</text>
</comment>
<comment type="subcellular location">
    <subcellularLocation>
        <location>Plastid</location>
        <location>Chloroplast</location>
    </subcellularLocation>
</comment>
<comment type="similarity">
    <text evidence="1">Belongs to the universal ribosomal protein uS14 family.</text>
</comment>
<geneLocation type="chloroplast"/>
<evidence type="ECO:0000255" key="1">
    <source>
        <dbReference type="HAMAP-Rule" id="MF_00537"/>
    </source>
</evidence>
<evidence type="ECO:0000305" key="2"/>